<sequence length="192" mass="21143">MGASASTGLSRSQAALRIAPCQRWQIHPALRRPIFRACGRICRPRRKTQIAQTIATLMRRMQAIPGTPGRGLGRADQLEQKKVLAAFGGHAAKNKSNAYMLKGSEAETDAKARGDWEAAMEAFGQSQDEFHETSPRAKNASFTWTAVDGEFAAPSERITNEMLAEITERNADFLGHAQSGLEMLRRFEKRAG</sequence>
<proteinExistence type="predicted"/>
<reference key="1">
    <citation type="journal article" date="1997" name="Nature">
        <title>Molecular basis of symbiosis between Rhizobium and legumes.</title>
        <authorList>
            <person name="Freiberg C.A."/>
            <person name="Fellay R."/>
            <person name="Bairoch A."/>
            <person name="Broughton W.J."/>
            <person name="Rosenthal A."/>
            <person name="Perret X."/>
        </authorList>
    </citation>
    <scope>NUCLEOTIDE SEQUENCE [LARGE SCALE GENOMIC DNA]</scope>
    <source>
        <strain>NBRC 101917 / NGR234</strain>
    </source>
</reference>
<reference key="2">
    <citation type="journal article" date="2009" name="Appl. Environ. Microbiol.">
        <title>Rhizobium sp. strain NGR234 possesses a remarkable number of secretion systems.</title>
        <authorList>
            <person name="Schmeisser C."/>
            <person name="Liesegang H."/>
            <person name="Krysciak D."/>
            <person name="Bakkou N."/>
            <person name="Le Quere A."/>
            <person name="Wollherr A."/>
            <person name="Heinemeyer I."/>
            <person name="Morgenstern B."/>
            <person name="Pommerening-Roeser A."/>
            <person name="Flores M."/>
            <person name="Palacios R."/>
            <person name="Brenner S."/>
            <person name="Gottschalk G."/>
            <person name="Schmitz R.A."/>
            <person name="Broughton W.J."/>
            <person name="Perret X."/>
            <person name="Strittmatter A.W."/>
            <person name="Streit W.R."/>
        </authorList>
    </citation>
    <scope>NUCLEOTIDE SEQUENCE [LARGE SCALE GENOMIC DNA]</scope>
    <source>
        <strain>NBRC 101917 / NGR234</strain>
    </source>
</reference>
<name>Y4GJ_SINFN</name>
<feature type="chain" id="PRO_0000200847" description="Uncharacterized protein y4gJ">
    <location>
        <begin position="1"/>
        <end position="192"/>
    </location>
</feature>
<organism>
    <name type="scientific">Sinorhizobium fredii (strain NBRC 101917 / NGR234)</name>
    <dbReference type="NCBI Taxonomy" id="394"/>
    <lineage>
        <taxon>Bacteria</taxon>
        <taxon>Pseudomonadati</taxon>
        <taxon>Pseudomonadota</taxon>
        <taxon>Alphaproteobacteria</taxon>
        <taxon>Hyphomicrobiales</taxon>
        <taxon>Rhizobiaceae</taxon>
        <taxon>Sinorhizobium/Ensifer group</taxon>
        <taxon>Sinorhizobium</taxon>
    </lineage>
</organism>
<accession>P55466</accession>
<geneLocation type="plasmid">
    <name>sym pNGR234a</name>
</geneLocation>
<protein>
    <recommendedName>
        <fullName>Uncharacterized protein y4gJ</fullName>
    </recommendedName>
</protein>
<keyword id="KW-0614">Plasmid</keyword>
<keyword id="KW-1185">Reference proteome</keyword>
<dbReference type="EMBL" id="U00090">
    <property type="protein sequence ID" value="AAB91684.1"/>
    <property type="molecule type" value="Genomic_DNA"/>
</dbReference>
<dbReference type="RefSeq" id="NP_443872.1">
    <property type="nucleotide sequence ID" value="NC_000914.2"/>
</dbReference>
<dbReference type="KEGG" id="rhi:NGR_a03540"/>
<dbReference type="PATRIC" id="fig|394.7.peg.362"/>
<dbReference type="eggNOG" id="ENOG5030PI2">
    <property type="taxonomic scope" value="Bacteria"/>
</dbReference>
<dbReference type="HOGENOM" id="CLU_1414179_0_0_5"/>
<dbReference type="OrthoDB" id="8076387at2"/>
<dbReference type="Proteomes" id="UP000001054">
    <property type="component" value="Plasmid pNGR234a"/>
</dbReference>
<dbReference type="InterPro" id="IPR030987">
    <property type="entry name" value="AbiV"/>
</dbReference>
<dbReference type="NCBIfam" id="TIGR04498">
    <property type="entry name" value="AbiV_defense"/>
    <property type="match status" value="1"/>
</dbReference>
<dbReference type="Pfam" id="PF18728">
    <property type="entry name" value="HEPN_AbiV"/>
    <property type="match status" value="1"/>
</dbReference>
<gene>
    <name type="ordered locus">NGR_a03540</name>
    <name type="ORF">y4gJ</name>
</gene>